<protein>
    <recommendedName>
        <fullName evidence="1">UDP-N-acetylglucosamine--N-acetylmuramyl-(pentapeptide) pyrophosphoryl-undecaprenol N-acetylglucosamine transferase</fullName>
        <ecNumber evidence="1">2.4.1.227</ecNumber>
    </recommendedName>
    <alternativeName>
        <fullName evidence="1">Undecaprenyl-PP-MurNAc-pentapeptide-UDPGlcNAc GlcNAc transferase</fullName>
    </alternativeName>
</protein>
<proteinExistence type="inferred from homology"/>
<organism>
    <name type="scientific">Chlorobium phaeobacteroides (strain DSM 266 / SMG 266 / 2430)</name>
    <dbReference type="NCBI Taxonomy" id="290317"/>
    <lineage>
        <taxon>Bacteria</taxon>
        <taxon>Pseudomonadati</taxon>
        <taxon>Chlorobiota</taxon>
        <taxon>Chlorobiia</taxon>
        <taxon>Chlorobiales</taxon>
        <taxon>Chlorobiaceae</taxon>
        <taxon>Chlorobium/Pelodictyon group</taxon>
        <taxon>Chlorobium</taxon>
    </lineage>
</organism>
<reference key="1">
    <citation type="submission" date="2006-12" db="EMBL/GenBank/DDBJ databases">
        <title>Complete sequence of Chlorobium phaeobacteroides DSM 266.</title>
        <authorList>
            <consortium name="US DOE Joint Genome Institute"/>
            <person name="Copeland A."/>
            <person name="Lucas S."/>
            <person name="Lapidus A."/>
            <person name="Barry K."/>
            <person name="Detter J.C."/>
            <person name="Glavina del Rio T."/>
            <person name="Hammon N."/>
            <person name="Israni S."/>
            <person name="Pitluck S."/>
            <person name="Goltsman E."/>
            <person name="Schmutz J."/>
            <person name="Larimer F."/>
            <person name="Land M."/>
            <person name="Hauser L."/>
            <person name="Mikhailova N."/>
            <person name="Li T."/>
            <person name="Overmann J."/>
            <person name="Bryant D.A."/>
            <person name="Richardson P."/>
        </authorList>
    </citation>
    <scope>NUCLEOTIDE SEQUENCE [LARGE SCALE GENOMIC DNA]</scope>
    <source>
        <strain>DSM 266 / SMG 266 / 2430</strain>
    </source>
</reference>
<sequence>MNVLFAGGGTGGHLYPAVAMAGELQKRVPHVKLSFAGTEAGIEAREIPRLGYRLHLLSVRGLKRGRSLGALVDNLGVLADFIGAVRSALAIINSESPDVVVGTGGFVSAPLLLAAQMRGKKTLIQEQNAFPGVTTKLLSLFASEIHLSFEEAKPYIARKKEVYISGNPSRSFSAIDPDQARLRFGLAESLPTLLVFGGSRGARSINNAVLKWLDQITASANLIWQTGSLDYERIKAGVTSSARIWIGPYIENMGEAYAASELVVCRAGASTIAEVTNTAKPSVLVPYPHATGDHQRHNARALAENGAALLIDDEHLQAPESRQLVLDLLHDRTRRSAMSKAALLLAYPDATAALVDRIIRLAKS</sequence>
<gene>
    <name evidence="1" type="primary">murG</name>
    <name type="ordered locus">Cpha266_2721</name>
</gene>
<name>MURG_CHLPD</name>
<feature type="chain" id="PRO_1000002630" description="UDP-N-acetylglucosamine--N-acetylmuramyl-(pentapeptide) pyrophosphoryl-undecaprenol N-acetylglucosamine transferase">
    <location>
        <begin position="1"/>
        <end position="364"/>
    </location>
</feature>
<feature type="binding site" evidence="1">
    <location>
        <begin position="10"/>
        <end position="12"/>
    </location>
    <ligand>
        <name>UDP-N-acetyl-alpha-D-glucosamine</name>
        <dbReference type="ChEBI" id="CHEBI:57705"/>
    </ligand>
</feature>
<feature type="binding site" evidence="1">
    <location>
        <position position="128"/>
    </location>
    <ligand>
        <name>UDP-N-acetyl-alpha-D-glucosamine</name>
        <dbReference type="ChEBI" id="CHEBI:57705"/>
    </ligand>
</feature>
<feature type="binding site" evidence="1">
    <location>
        <position position="170"/>
    </location>
    <ligand>
        <name>UDP-N-acetyl-alpha-D-glucosamine</name>
        <dbReference type="ChEBI" id="CHEBI:57705"/>
    </ligand>
</feature>
<feature type="binding site" evidence="1">
    <location>
        <position position="199"/>
    </location>
    <ligand>
        <name>UDP-N-acetyl-alpha-D-glucosamine</name>
        <dbReference type="ChEBI" id="CHEBI:57705"/>
    </ligand>
</feature>
<feature type="binding site" evidence="1">
    <location>
        <position position="250"/>
    </location>
    <ligand>
        <name>UDP-N-acetyl-alpha-D-glucosamine</name>
        <dbReference type="ChEBI" id="CHEBI:57705"/>
    </ligand>
</feature>
<feature type="binding site" evidence="1">
    <location>
        <position position="295"/>
    </location>
    <ligand>
        <name>UDP-N-acetyl-alpha-D-glucosamine</name>
        <dbReference type="ChEBI" id="CHEBI:57705"/>
    </ligand>
</feature>
<comment type="function">
    <text evidence="1">Cell wall formation. Catalyzes the transfer of a GlcNAc subunit on undecaprenyl-pyrophosphoryl-MurNAc-pentapeptide (lipid intermediate I) to form undecaprenyl-pyrophosphoryl-MurNAc-(pentapeptide)GlcNAc (lipid intermediate II).</text>
</comment>
<comment type="catalytic activity">
    <reaction evidence="1">
        <text>di-trans,octa-cis-undecaprenyl diphospho-N-acetyl-alpha-D-muramoyl-L-alanyl-D-glutamyl-meso-2,6-diaminopimeloyl-D-alanyl-D-alanine + UDP-N-acetyl-alpha-D-glucosamine = di-trans,octa-cis-undecaprenyl diphospho-[N-acetyl-alpha-D-glucosaminyl-(1-&gt;4)]-N-acetyl-alpha-D-muramoyl-L-alanyl-D-glutamyl-meso-2,6-diaminopimeloyl-D-alanyl-D-alanine + UDP + H(+)</text>
        <dbReference type="Rhea" id="RHEA:31227"/>
        <dbReference type="ChEBI" id="CHEBI:15378"/>
        <dbReference type="ChEBI" id="CHEBI:57705"/>
        <dbReference type="ChEBI" id="CHEBI:58223"/>
        <dbReference type="ChEBI" id="CHEBI:61387"/>
        <dbReference type="ChEBI" id="CHEBI:61388"/>
        <dbReference type="EC" id="2.4.1.227"/>
    </reaction>
</comment>
<comment type="pathway">
    <text evidence="1">Cell wall biogenesis; peptidoglycan biosynthesis.</text>
</comment>
<comment type="subcellular location">
    <subcellularLocation>
        <location evidence="1">Cell inner membrane</location>
        <topology evidence="1">Peripheral membrane protein</topology>
        <orientation evidence="1">Cytoplasmic side</orientation>
    </subcellularLocation>
</comment>
<comment type="similarity">
    <text evidence="1">Belongs to the glycosyltransferase 28 family. MurG subfamily.</text>
</comment>
<evidence type="ECO:0000255" key="1">
    <source>
        <dbReference type="HAMAP-Rule" id="MF_00033"/>
    </source>
</evidence>
<accession>A1BJX8</accession>
<keyword id="KW-0131">Cell cycle</keyword>
<keyword id="KW-0132">Cell division</keyword>
<keyword id="KW-0997">Cell inner membrane</keyword>
<keyword id="KW-1003">Cell membrane</keyword>
<keyword id="KW-0133">Cell shape</keyword>
<keyword id="KW-0961">Cell wall biogenesis/degradation</keyword>
<keyword id="KW-0328">Glycosyltransferase</keyword>
<keyword id="KW-0472">Membrane</keyword>
<keyword id="KW-0573">Peptidoglycan synthesis</keyword>
<keyword id="KW-1185">Reference proteome</keyword>
<keyword id="KW-0808">Transferase</keyword>
<dbReference type="EC" id="2.4.1.227" evidence="1"/>
<dbReference type="EMBL" id="CP000492">
    <property type="protein sequence ID" value="ABL66705.1"/>
    <property type="molecule type" value="Genomic_DNA"/>
</dbReference>
<dbReference type="RefSeq" id="WP_015961232.1">
    <property type="nucleotide sequence ID" value="NC_008639.1"/>
</dbReference>
<dbReference type="SMR" id="A1BJX8"/>
<dbReference type="STRING" id="290317.Cpha266_2721"/>
<dbReference type="CAZy" id="GT28">
    <property type="family name" value="Glycosyltransferase Family 28"/>
</dbReference>
<dbReference type="KEGG" id="cph:Cpha266_2721"/>
<dbReference type="eggNOG" id="COG0707">
    <property type="taxonomic scope" value="Bacteria"/>
</dbReference>
<dbReference type="HOGENOM" id="CLU_037404_1_0_10"/>
<dbReference type="OrthoDB" id="9808936at2"/>
<dbReference type="UniPathway" id="UPA00219"/>
<dbReference type="Proteomes" id="UP000008701">
    <property type="component" value="Chromosome"/>
</dbReference>
<dbReference type="GO" id="GO:0005886">
    <property type="term" value="C:plasma membrane"/>
    <property type="evidence" value="ECO:0007669"/>
    <property type="project" value="UniProtKB-SubCell"/>
</dbReference>
<dbReference type="GO" id="GO:0051991">
    <property type="term" value="F:UDP-N-acetyl-D-glucosamine:N-acetylmuramoyl-L-alanyl-D-glutamyl-meso-2,6-diaminopimelyl-D-alanyl-D-alanine-diphosphoundecaprenol 4-beta-N-acetylglucosaminlytransferase activity"/>
    <property type="evidence" value="ECO:0007669"/>
    <property type="project" value="RHEA"/>
</dbReference>
<dbReference type="GO" id="GO:0050511">
    <property type="term" value="F:undecaprenyldiphospho-muramoylpentapeptide beta-N-acetylglucosaminyltransferase activity"/>
    <property type="evidence" value="ECO:0007669"/>
    <property type="project" value="UniProtKB-UniRule"/>
</dbReference>
<dbReference type="GO" id="GO:0005975">
    <property type="term" value="P:carbohydrate metabolic process"/>
    <property type="evidence" value="ECO:0007669"/>
    <property type="project" value="InterPro"/>
</dbReference>
<dbReference type="GO" id="GO:0051301">
    <property type="term" value="P:cell division"/>
    <property type="evidence" value="ECO:0007669"/>
    <property type="project" value="UniProtKB-KW"/>
</dbReference>
<dbReference type="GO" id="GO:0071555">
    <property type="term" value="P:cell wall organization"/>
    <property type="evidence" value="ECO:0007669"/>
    <property type="project" value="UniProtKB-KW"/>
</dbReference>
<dbReference type="GO" id="GO:0030259">
    <property type="term" value="P:lipid glycosylation"/>
    <property type="evidence" value="ECO:0007669"/>
    <property type="project" value="UniProtKB-UniRule"/>
</dbReference>
<dbReference type="GO" id="GO:0009252">
    <property type="term" value="P:peptidoglycan biosynthetic process"/>
    <property type="evidence" value="ECO:0007669"/>
    <property type="project" value="UniProtKB-UniRule"/>
</dbReference>
<dbReference type="GO" id="GO:0008360">
    <property type="term" value="P:regulation of cell shape"/>
    <property type="evidence" value="ECO:0007669"/>
    <property type="project" value="UniProtKB-KW"/>
</dbReference>
<dbReference type="CDD" id="cd03785">
    <property type="entry name" value="GT28_MurG"/>
    <property type="match status" value="1"/>
</dbReference>
<dbReference type="Gene3D" id="3.40.50.2000">
    <property type="entry name" value="Glycogen Phosphorylase B"/>
    <property type="match status" value="2"/>
</dbReference>
<dbReference type="HAMAP" id="MF_00033">
    <property type="entry name" value="MurG"/>
    <property type="match status" value="1"/>
</dbReference>
<dbReference type="InterPro" id="IPR006009">
    <property type="entry name" value="GlcNAc_MurG"/>
</dbReference>
<dbReference type="InterPro" id="IPR007235">
    <property type="entry name" value="Glyco_trans_28_C"/>
</dbReference>
<dbReference type="InterPro" id="IPR004276">
    <property type="entry name" value="GlycoTrans_28_N"/>
</dbReference>
<dbReference type="NCBIfam" id="TIGR01133">
    <property type="entry name" value="murG"/>
    <property type="match status" value="1"/>
</dbReference>
<dbReference type="PANTHER" id="PTHR21015:SF22">
    <property type="entry name" value="GLYCOSYLTRANSFERASE"/>
    <property type="match status" value="1"/>
</dbReference>
<dbReference type="PANTHER" id="PTHR21015">
    <property type="entry name" value="UDP-N-ACETYLGLUCOSAMINE--N-ACETYLMURAMYL-(PENTAPEPTIDE) PYROPHOSPHORYL-UNDECAPRENOL N-ACETYLGLUCOSAMINE TRANSFERASE 1"/>
    <property type="match status" value="1"/>
</dbReference>
<dbReference type="Pfam" id="PF04101">
    <property type="entry name" value="Glyco_tran_28_C"/>
    <property type="match status" value="1"/>
</dbReference>
<dbReference type="Pfam" id="PF03033">
    <property type="entry name" value="Glyco_transf_28"/>
    <property type="match status" value="1"/>
</dbReference>
<dbReference type="SUPFAM" id="SSF53756">
    <property type="entry name" value="UDP-Glycosyltransferase/glycogen phosphorylase"/>
    <property type="match status" value="1"/>
</dbReference>